<evidence type="ECO:0000255" key="1">
    <source>
        <dbReference type="HAMAP-Rule" id="MF_00195"/>
    </source>
</evidence>
<protein>
    <recommendedName>
        <fullName evidence="1">GTPase Der</fullName>
    </recommendedName>
    <alternativeName>
        <fullName evidence="1">GTP-binding protein EngA</fullName>
    </alternativeName>
</protein>
<comment type="function">
    <text evidence="1">GTPase that plays an essential role in the late steps of ribosome biogenesis.</text>
</comment>
<comment type="subunit">
    <text evidence="1">Associates with the 50S ribosomal subunit.</text>
</comment>
<comment type="similarity">
    <text evidence="1">Belongs to the TRAFAC class TrmE-Era-EngA-EngB-Septin-like GTPase superfamily. EngA (Der) GTPase family.</text>
</comment>
<keyword id="KW-0342">GTP-binding</keyword>
<keyword id="KW-0547">Nucleotide-binding</keyword>
<keyword id="KW-1185">Reference proteome</keyword>
<keyword id="KW-0677">Repeat</keyword>
<keyword id="KW-0690">Ribosome biogenesis</keyword>
<gene>
    <name evidence="1" type="primary">der</name>
    <name type="synonym">engA</name>
    <name type="ordered locus">BA_1525</name>
    <name type="ordered locus">GBAA_1525</name>
    <name type="ordered locus">BAS1414</name>
</gene>
<sequence>MPKPVIAIVGRPNVGKSTIFNRIVGERVSIVEDIPGVTRDRIYSAGEWLNHEFNIIDTGGIDIGDEPFLTQIRQQAEVAIDEADVIIFMTNGRDGVTAADEEVAKILYRSNKPVVLAVNKVDNPEMRSDIYDFYALGFGEPFPISGTHGLGLGDLLDEAAQHFPKIEEDGYDEDTIRFSLIGRPNVGKSSLVNALLGQERVIVSNVAGTTRDAVDTPYSKDGKDYVIIDTAGMRKKGKVYESTEKYSVLRALRAIERSDVVLVVLDGEEGIIEQDKKIAGYAHDSGRAVVIVVNKWDAVKKDEKTMKAFEENIRAHFQFLEYAPIVFLSAKTRKRTQTLIPVIDEVNESHSIRIQTNVLNDVIMDAVAMNPTPTHNGSRLKIFYATQVAVKPPTFVVFVNDPELLHFSYERFLKNRLRESFGFVGTPIHIIARARD</sequence>
<accession>Q81SW9</accession>
<accession>Q6I148</accession>
<accession>Q6KV02</accession>
<organism>
    <name type="scientific">Bacillus anthracis</name>
    <dbReference type="NCBI Taxonomy" id="1392"/>
    <lineage>
        <taxon>Bacteria</taxon>
        <taxon>Bacillati</taxon>
        <taxon>Bacillota</taxon>
        <taxon>Bacilli</taxon>
        <taxon>Bacillales</taxon>
        <taxon>Bacillaceae</taxon>
        <taxon>Bacillus</taxon>
        <taxon>Bacillus cereus group</taxon>
    </lineage>
</organism>
<proteinExistence type="inferred from homology"/>
<dbReference type="EMBL" id="AE016879">
    <property type="protein sequence ID" value="AAP25462.1"/>
    <property type="molecule type" value="Genomic_DNA"/>
</dbReference>
<dbReference type="EMBL" id="AE017334">
    <property type="protein sequence ID" value="AAT30623.1"/>
    <property type="molecule type" value="Genomic_DNA"/>
</dbReference>
<dbReference type="EMBL" id="AE017225">
    <property type="protein sequence ID" value="AAT53734.1"/>
    <property type="molecule type" value="Genomic_DNA"/>
</dbReference>
<dbReference type="RefSeq" id="NP_843976.1">
    <property type="nucleotide sequence ID" value="NC_003997.3"/>
</dbReference>
<dbReference type="RefSeq" id="WP_001125893.1">
    <property type="nucleotide sequence ID" value="NZ_WXXJ01000014.1"/>
</dbReference>
<dbReference type="RefSeq" id="YP_027683.1">
    <property type="nucleotide sequence ID" value="NC_005945.1"/>
</dbReference>
<dbReference type="SMR" id="Q81SW9"/>
<dbReference type="IntAct" id="Q81SW9">
    <property type="interactions" value="1"/>
</dbReference>
<dbReference type="STRING" id="261594.GBAA_1525"/>
<dbReference type="DNASU" id="1086325"/>
<dbReference type="GeneID" id="93009536"/>
<dbReference type="KEGG" id="ban:BA_1525"/>
<dbReference type="KEGG" id="bar:GBAA_1525"/>
<dbReference type="KEGG" id="bat:BAS1414"/>
<dbReference type="PATRIC" id="fig|198094.11.peg.1497"/>
<dbReference type="eggNOG" id="COG1160">
    <property type="taxonomic scope" value="Bacteria"/>
</dbReference>
<dbReference type="HOGENOM" id="CLU_016077_6_2_9"/>
<dbReference type="OMA" id="CNLPQYV"/>
<dbReference type="OrthoDB" id="9805918at2"/>
<dbReference type="Proteomes" id="UP000000427">
    <property type="component" value="Chromosome"/>
</dbReference>
<dbReference type="Proteomes" id="UP000000594">
    <property type="component" value="Chromosome"/>
</dbReference>
<dbReference type="GO" id="GO:0005525">
    <property type="term" value="F:GTP binding"/>
    <property type="evidence" value="ECO:0007669"/>
    <property type="project" value="UniProtKB-UniRule"/>
</dbReference>
<dbReference type="GO" id="GO:0043022">
    <property type="term" value="F:ribosome binding"/>
    <property type="evidence" value="ECO:0007669"/>
    <property type="project" value="TreeGrafter"/>
</dbReference>
<dbReference type="GO" id="GO:0042254">
    <property type="term" value="P:ribosome biogenesis"/>
    <property type="evidence" value="ECO:0007669"/>
    <property type="project" value="UniProtKB-KW"/>
</dbReference>
<dbReference type="CDD" id="cd01894">
    <property type="entry name" value="EngA1"/>
    <property type="match status" value="1"/>
</dbReference>
<dbReference type="CDD" id="cd01895">
    <property type="entry name" value="EngA2"/>
    <property type="match status" value="1"/>
</dbReference>
<dbReference type="FunFam" id="3.30.300.20:FF:000004">
    <property type="entry name" value="GTPase Der"/>
    <property type="match status" value="1"/>
</dbReference>
<dbReference type="FunFam" id="3.40.50.300:FF:000040">
    <property type="entry name" value="GTPase Der"/>
    <property type="match status" value="1"/>
</dbReference>
<dbReference type="FunFam" id="3.40.50.300:FF:000057">
    <property type="entry name" value="GTPase Der"/>
    <property type="match status" value="1"/>
</dbReference>
<dbReference type="Gene3D" id="3.30.300.20">
    <property type="match status" value="1"/>
</dbReference>
<dbReference type="Gene3D" id="3.40.50.300">
    <property type="entry name" value="P-loop containing nucleotide triphosphate hydrolases"/>
    <property type="match status" value="2"/>
</dbReference>
<dbReference type="HAMAP" id="MF_00195">
    <property type="entry name" value="GTPase_Der"/>
    <property type="match status" value="1"/>
</dbReference>
<dbReference type="InterPro" id="IPR031166">
    <property type="entry name" value="G_ENGA"/>
</dbReference>
<dbReference type="InterPro" id="IPR006073">
    <property type="entry name" value="GTP-bd"/>
</dbReference>
<dbReference type="InterPro" id="IPR016484">
    <property type="entry name" value="GTPase_Der"/>
</dbReference>
<dbReference type="InterPro" id="IPR032859">
    <property type="entry name" value="KH_dom-like"/>
</dbReference>
<dbReference type="InterPro" id="IPR015946">
    <property type="entry name" value="KH_dom-like_a/b"/>
</dbReference>
<dbReference type="InterPro" id="IPR027417">
    <property type="entry name" value="P-loop_NTPase"/>
</dbReference>
<dbReference type="InterPro" id="IPR005225">
    <property type="entry name" value="Small_GTP-bd"/>
</dbReference>
<dbReference type="NCBIfam" id="TIGR03594">
    <property type="entry name" value="GTPase_EngA"/>
    <property type="match status" value="1"/>
</dbReference>
<dbReference type="NCBIfam" id="TIGR00231">
    <property type="entry name" value="small_GTP"/>
    <property type="match status" value="2"/>
</dbReference>
<dbReference type="PANTHER" id="PTHR43834">
    <property type="entry name" value="GTPASE DER"/>
    <property type="match status" value="1"/>
</dbReference>
<dbReference type="PANTHER" id="PTHR43834:SF6">
    <property type="entry name" value="GTPASE DER"/>
    <property type="match status" value="1"/>
</dbReference>
<dbReference type="Pfam" id="PF14714">
    <property type="entry name" value="KH_dom-like"/>
    <property type="match status" value="1"/>
</dbReference>
<dbReference type="Pfam" id="PF01926">
    <property type="entry name" value="MMR_HSR1"/>
    <property type="match status" value="2"/>
</dbReference>
<dbReference type="PIRSF" id="PIRSF006485">
    <property type="entry name" value="GTP-binding_EngA"/>
    <property type="match status" value="1"/>
</dbReference>
<dbReference type="PRINTS" id="PR00326">
    <property type="entry name" value="GTP1OBG"/>
</dbReference>
<dbReference type="SUPFAM" id="SSF52540">
    <property type="entry name" value="P-loop containing nucleoside triphosphate hydrolases"/>
    <property type="match status" value="2"/>
</dbReference>
<dbReference type="PROSITE" id="PS51712">
    <property type="entry name" value="G_ENGA"/>
    <property type="match status" value="2"/>
</dbReference>
<name>DER_BACAN</name>
<feature type="chain" id="PRO_0000178961" description="GTPase Der">
    <location>
        <begin position="1"/>
        <end position="436"/>
    </location>
</feature>
<feature type="domain" description="EngA-type G 1">
    <location>
        <begin position="4"/>
        <end position="167"/>
    </location>
</feature>
<feature type="domain" description="EngA-type G 2">
    <location>
        <begin position="176"/>
        <end position="351"/>
    </location>
</feature>
<feature type="domain" description="KH-like" evidence="1">
    <location>
        <begin position="352"/>
        <end position="436"/>
    </location>
</feature>
<feature type="binding site" evidence="1">
    <location>
        <begin position="10"/>
        <end position="17"/>
    </location>
    <ligand>
        <name>GTP</name>
        <dbReference type="ChEBI" id="CHEBI:37565"/>
        <label>1</label>
    </ligand>
</feature>
<feature type="binding site" evidence="1">
    <location>
        <begin position="57"/>
        <end position="61"/>
    </location>
    <ligand>
        <name>GTP</name>
        <dbReference type="ChEBI" id="CHEBI:37565"/>
        <label>1</label>
    </ligand>
</feature>
<feature type="binding site" evidence="1">
    <location>
        <begin position="119"/>
        <end position="122"/>
    </location>
    <ligand>
        <name>GTP</name>
        <dbReference type="ChEBI" id="CHEBI:37565"/>
        <label>1</label>
    </ligand>
</feature>
<feature type="binding site" evidence="1">
    <location>
        <begin position="182"/>
        <end position="189"/>
    </location>
    <ligand>
        <name>GTP</name>
        <dbReference type="ChEBI" id="CHEBI:37565"/>
        <label>2</label>
    </ligand>
</feature>
<feature type="binding site" evidence="1">
    <location>
        <begin position="229"/>
        <end position="233"/>
    </location>
    <ligand>
        <name>GTP</name>
        <dbReference type="ChEBI" id="CHEBI:37565"/>
        <label>2</label>
    </ligand>
</feature>
<feature type="binding site" evidence="1">
    <location>
        <begin position="294"/>
        <end position="297"/>
    </location>
    <ligand>
        <name>GTP</name>
        <dbReference type="ChEBI" id="CHEBI:37565"/>
        <label>2</label>
    </ligand>
</feature>
<reference key="1">
    <citation type="journal article" date="2003" name="Nature">
        <title>The genome sequence of Bacillus anthracis Ames and comparison to closely related bacteria.</title>
        <authorList>
            <person name="Read T.D."/>
            <person name="Peterson S.N."/>
            <person name="Tourasse N.J."/>
            <person name="Baillie L.W."/>
            <person name="Paulsen I.T."/>
            <person name="Nelson K.E."/>
            <person name="Tettelin H."/>
            <person name="Fouts D.E."/>
            <person name="Eisen J.A."/>
            <person name="Gill S.R."/>
            <person name="Holtzapple E.K."/>
            <person name="Okstad O.A."/>
            <person name="Helgason E."/>
            <person name="Rilstone J."/>
            <person name="Wu M."/>
            <person name="Kolonay J.F."/>
            <person name="Beanan M.J."/>
            <person name="Dodson R.J."/>
            <person name="Brinkac L.M."/>
            <person name="Gwinn M.L."/>
            <person name="DeBoy R.T."/>
            <person name="Madpu R."/>
            <person name="Daugherty S.C."/>
            <person name="Durkin A.S."/>
            <person name="Haft D.H."/>
            <person name="Nelson W.C."/>
            <person name="Peterson J.D."/>
            <person name="Pop M."/>
            <person name="Khouri H.M."/>
            <person name="Radune D."/>
            <person name="Benton J.L."/>
            <person name="Mahamoud Y."/>
            <person name="Jiang L."/>
            <person name="Hance I.R."/>
            <person name="Weidman J.F."/>
            <person name="Berry K.J."/>
            <person name="Plaut R.D."/>
            <person name="Wolf A.M."/>
            <person name="Watkins K.L."/>
            <person name="Nierman W.C."/>
            <person name="Hazen A."/>
            <person name="Cline R.T."/>
            <person name="Redmond C."/>
            <person name="Thwaite J.E."/>
            <person name="White O."/>
            <person name="Salzberg S.L."/>
            <person name="Thomason B."/>
            <person name="Friedlander A.M."/>
            <person name="Koehler T.M."/>
            <person name="Hanna P.C."/>
            <person name="Kolstoe A.-B."/>
            <person name="Fraser C.M."/>
        </authorList>
    </citation>
    <scope>NUCLEOTIDE SEQUENCE [LARGE SCALE GENOMIC DNA]</scope>
    <source>
        <strain>Ames / isolate Porton</strain>
    </source>
</reference>
<reference key="2">
    <citation type="journal article" date="2009" name="J. Bacteriol.">
        <title>The complete genome sequence of Bacillus anthracis Ames 'Ancestor'.</title>
        <authorList>
            <person name="Ravel J."/>
            <person name="Jiang L."/>
            <person name="Stanley S.T."/>
            <person name="Wilson M.R."/>
            <person name="Decker R.S."/>
            <person name="Read T.D."/>
            <person name="Worsham P."/>
            <person name="Keim P.S."/>
            <person name="Salzberg S.L."/>
            <person name="Fraser-Liggett C.M."/>
            <person name="Rasko D.A."/>
        </authorList>
    </citation>
    <scope>NUCLEOTIDE SEQUENCE [LARGE SCALE GENOMIC DNA]</scope>
    <source>
        <strain>Ames ancestor</strain>
    </source>
</reference>
<reference key="3">
    <citation type="submission" date="2004-01" db="EMBL/GenBank/DDBJ databases">
        <title>Complete genome sequence of Bacillus anthracis Sterne.</title>
        <authorList>
            <person name="Brettin T.S."/>
            <person name="Bruce D."/>
            <person name="Challacombe J.F."/>
            <person name="Gilna P."/>
            <person name="Han C."/>
            <person name="Hill K."/>
            <person name="Hitchcock P."/>
            <person name="Jackson P."/>
            <person name="Keim P."/>
            <person name="Longmire J."/>
            <person name="Lucas S."/>
            <person name="Okinaka R."/>
            <person name="Richardson P."/>
            <person name="Rubin E."/>
            <person name="Tice H."/>
        </authorList>
    </citation>
    <scope>NUCLEOTIDE SEQUENCE [LARGE SCALE GENOMIC DNA]</scope>
    <source>
        <strain>Sterne</strain>
    </source>
</reference>